<keyword id="KW-0903">Direct protein sequencing</keyword>
<keyword id="KW-1015">Disulfide bond</keyword>
<keyword id="KW-0528">Neurotoxin</keyword>
<keyword id="KW-0638">Presynaptic neurotoxin</keyword>
<keyword id="KW-0964">Secreted</keyword>
<keyword id="KW-0800">Toxin</keyword>
<reference evidence="4" key="1">
    <citation type="journal article" date="2003" name="J. Biochem.">
        <title>Isolation, toxicity and amino terminal sequences of three major neurotoxins in the venom of Malayan krait (Bungarus candidus) from Thailand.</title>
        <authorList>
            <person name="Khow O."/>
            <person name="Chanhome L."/>
            <person name="Omori-Satoh T."/>
            <person name="Ogawa Y."/>
            <person name="Yanoshita R."/>
            <person name="Samejima Y."/>
            <person name="Kuch U."/>
            <person name="Mebs D."/>
            <person name="Sitprija V."/>
        </authorList>
    </citation>
    <scope>PROTEIN SEQUENCE</scope>
    <scope>FUNCTION</scope>
    <scope>SUBUNIT</scope>
    <scope>SUBCELLULAR LOCATION</scope>
    <scope>TISSUE SPECIFICITY</scope>
    <scope>TOXIC DOSE</scope>
    <source>
        <tissue evidence="2">Venom</tissue>
    </source>
</reference>
<proteinExistence type="evidence at protein level"/>
<organism>
    <name type="scientific">Bungarus candidus</name>
    <name type="common">Malayan krait</name>
    <dbReference type="NCBI Taxonomy" id="92438"/>
    <lineage>
        <taxon>Eukaryota</taxon>
        <taxon>Metazoa</taxon>
        <taxon>Chordata</taxon>
        <taxon>Craniata</taxon>
        <taxon>Vertebrata</taxon>
        <taxon>Euteleostomi</taxon>
        <taxon>Lepidosauria</taxon>
        <taxon>Squamata</taxon>
        <taxon>Bifurcata</taxon>
        <taxon>Unidentata</taxon>
        <taxon>Episquamata</taxon>
        <taxon>Toxicofera</taxon>
        <taxon>Serpentes</taxon>
        <taxon>Colubroidea</taxon>
        <taxon>Elapidae</taxon>
        <taxon>Bungarinae</taxon>
        <taxon>Bungarus</taxon>
    </lineage>
</organism>
<accession>P84470</accession>
<protein>
    <recommendedName>
        <fullName>Kunitz-type serine protease inhibitor homolog T2 B chain</fullName>
    </recommendedName>
    <alternativeName>
        <fullName>Neurotoxin T2 B chain</fullName>
    </alternativeName>
</protein>
<name>VKTH8_BUNCA</name>
<sequence length="15" mass="1866">RQRHRDCDKPPDKTN</sequence>
<dbReference type="GO" id="GO:0005576">
    <property type="term" value="C:extracellular region"/>
    <property type="evidence" value="ECO:0007669"/>
    <property type="project" value="UniProtKB-SubCell"/>
</dbReference>
<dbReference type="GO" id="GO:0090729">
    <property type="term" value="F:toxin activity"/>
    <property type="evidence" value="ECO:0007669"/>
    <property type="project" value="UniProtKB-KW"/>
</dbReference>
<feature type="chain" id="PRO_0000155431" description="Kunitz-type serine protease inhibitor homolog T2 B chain">
    <location>
        <begin position="1"/>
        <end position="15" status="greater than"/>
    </location>
</feature>
<feature type="domain" description="BPTI/Kunitz inhibitor" evidence="1">
    <location>
        <begin position="1"/>
        <end position="15" status="greater than"/>
    </location>
</feature>
<feature type="non-terminal residue" evidence="3">
    <location>
        <position position="15"/>
    </location>
</feature>
<comment type="function">
    <text evidence="2">Neurotoxin T2 is a presynaptic neurotoxin of the venom that exhibits indirect hemolytic activity against human erythrocytes. The B chain is homologous to venom basic protease inhibitors but has no protease inhibitor activity and is non-toxic.</text>
</comment>
<comment type="subunit">
    <text evidence="2">Heterodimer; disulfide-linked. The A chains have phospholipase A2 activity and the B chains show homology with the basic protease inhibitors.</text>
</comment>
<comment type="subcellular location">
    <subcellularLocation>
        <location evidence="2">Secreted</location>
    </subcellularLocation>
</comment>
<comment type="tissue specificity">
    <text evidence="2">Expressed by the venom gland.</text>
</comment>
<comment type="toxic dose">
    <text evidence="2">LD(50) is 0.22 mg/kg by intravenous injection in mice.</text>
</comment>
<comment type="similarity">
    <text evidence="4">Belongs to the venom Kunitz-type family.</text>
</comment>
<evidence type="ECO:0000255" key="1">
    <source>
        <dbReference type="PROSITE-ProRule" id="PRU00031"/>
    </source>
</evidence>
<evidence type="ECO:0000269" key="2">
    <source>
    </source>
</evidence>
<evidence type="ECO:0000303" key="3">
    <source>
    </source>
</evidence>
<evidence type="ECO:0000305" key="4"/>